<comment type="similarity">
    <text evidence="1">Belongs to the bacterial ribosomal protein bL32 family.</text>
</comment>
<keyword id="KW-1185">Reference proteome</keyword>
<keyword id="KW-0687">Ribonucleoprotein</keyword>
<keyword id="KW-0689">Ribosomal protein</keyword>
<dbReference type="EMBL" id="AP006840">
    <property type="protein sequence ID" value="BAD40428.1"/>
    <property type="molecule type" value="Genomic_DNA"/>
</dbReference>
<dbReference type="RefSeq" id="WP_011195573.1">
    <property type="nucleotide sequence ID" value="NC_006177.1"/>
</dbReference>
<dbReference type="SMR" id="Q67PG5"/>
<dbReference type="STRING" id="292459.STH1443"/>
<dbReference type="KEGG" id="sth:STH1443"/>
<dbReference type="eggNOG" id="COG0333">
    <property type="taxonomic scope" value="Bacteria"/>
</dbReference>
<dbReference type="HOGENOM" id="CLU_129084_1_3_9"/>
<dbReference type="OrthoDB" id="9812874at2"/>
<dbReference type="Proteomes" id="UP000000417">
    <property type="component" value="Chromosome"/>
</dbReference>
<dbReference type="GO" id="GO:0015934">
    <property type="term" value="C:large ribosomal subunit"/>
    <property type="evidence" value="ECO:0007669"/>
    <property type="project" value="InterPro"/>
</dbReference>
<dbReference type="GO" id="GO:0003735">
    <property type="term" value="F:structural constituent of ribosome"/>
    <property type="evidence" value="ECO:0007669"/>
    <property type="project" value="InterPro"/>
</dbReference>
<dbReference type="GO" id="GO:0006412">
    <property type="term" value="P:translation"/>
    <property type="evidence" value="ECO:0007669"/>
    <property type="project" value="UniProtKB-UniRule"/>
</dbReference>
<dbReference type="Gene3D" id="1.20.5.640">
    <property type="entry name" value="Single helix bin"/>
    <property type="match status" value="1"/>
</dbReference>
<dbReference type="HAMAP" id="MF_00340">
    <property type="entry name" value="Ribosomal_bL32"/>
    <property type="match status" value="1"/>
</dbReference>
<dbReference type="InterPro" id="IPR002677">
    <property type="entry name" value="Ribosomal_bL32"/>
</dbReference>
<dbReference type="InterPro" id="IPR044957">
    <property type="entry name" value="Ribosomal_bL32_bact"/>
</dbReference>
<dbReference type="InterPro" id="IPR011332">
    <property type="entry name" value="Ribosomal_zn-bd"/>
</dbReference>
<dbReference type="NCBIfam" id="TIGR01031">
    <property type="entry name" value="rpmF_bact"/>
    <property type="match status" value="1"/>
</dbReference>
<dbReference type="PANTHER" id="PTHR35534">
    <property type="entry name" value="50S RIBOSOMAL PROTEIN L32"/>
    <property type="match status" value="1"/>
</dbReference>
<dbReference type="PANTHER" id="PTHR35534:SF1">
    <property type="entry name" value="LARGE RIBOSOMAL SUBUNIT PROTEIN BL32"/>
    <property type="match status" value="1"/>
</dbReference>
<dbReference type="Pfam" id="PF01783">
    <property type="entry name" value="Ribosomal_L32p"/>
    <property type="match status" value="1"/>
</dbReference>
<dbReference type="SUPFAM" id="SSF57829">
    <property type="entry name" value="Zn-binding ribosomal proteins"/>
    <property type="match status" value="1"/>
</dbReference>
<name>RL32_SYMTH</name>
<reference key="1">
    <citation type="journal article" date="2004" name="Nucleic Acids Res.">
        <title>Genome sequence of Symbiobacterium thermophilum, an uncultivable bacterium that depends on microbial commensalism.</title>
        <authorList>
            <person name="Ueda K."/>
            <person name="Yamashita A."/>
            <person name="Ishikawa J."/>
            <person name="Shimada M."/>
            <person name="Watsuji T."/>
            <person name="Morimura K."/>
            <person name="Ikeda H."/>
            <person name="Hattori M."/>
            <person name="Beppu T."/>
        </authorList>
    </citation>
    <scope>NUCLEOTIDE SEQUENCE [LARGE SCALE GENOMIC DNA]</scope>
    <source>
        <strain>DSM 24528 / JCM 14929 / IAM 14863 / T</strain>
    </source>
</reference>
<protein>
    <recommendedName>
        <fullName evidence="1">Large ribosomal subunit protein bL32</fullName>
    </recommendedName>
    <alternativeName>
        <fullName evidence="3">50S ribosomal protein L32</fullName>
    </alternativeName>
</protein>
<gene>
    <name evidence="1" type="primary">rpmF</name>
    <name type="ordered locus">STH1443</name>
</gene>
<evidence type="ECO:0000255" key="1">
    <source>
        <dbReference type="HAMAP-Rule" id="MF_00340"/>
    </source>
</evidence>
<evidence type="ECO:0000256" key="2">
    <source>
        <dbReference type="SAM" id="MobiDB-lite"/>
    </source>
</evidence>
<evidence type="ECO:0000305" key="3"/>
<organism>
    <name type="scientific">Symbiobacterium thermophilum (strain DSM 24528 / JCM 14929 / IAM 14863 / T)</name>
    <dbReference type="NCBI Taxonomy" id="292459"/>
    <lineage>
        <taxon>Bacteria</taxon>
        <taxon>Bacillati</taxon>
        <taxon>Bacillota</taxon>
        <taxon>Clostridia</taxon>
        <taxon>Eubacteriales</taxon>
        <taxon>Symbiobacteriaceae</taxon>
        <taxon>Symbiobacterium</taxon>
    </lineage>
</organism>
<accession>Q67PG5</accession>
<sequence length="64" mass="7333">MAVPKRKVSKSRRDSRRAQTFRLEAPNLSPCPNCRTPRLPHRVCPNCGYYQGRVVIQHEAEAAE</sequence>
<feature type="chain" id="PRO_0000225772" description="Large ribosomal subunit protein bL32">
    <location>
        <begin position="1"/>
        <end position="64"/>
    </location>
</feature>
<feature type="region of interest" description="Disordered" evidence="2">
    <location>
        <begin position="1"/>
        <end position="21"/>
    </location>
</feature>
<feature type="compositionally biased region" description="Basic residues" evidence="2">
    <location>
        <begin position="1"/>
        <end position="15"/>
    </location>
</feature>
<proteinExistence type="inferred from homology"/>